<feature type="chain" id="PRO_0000363810" description="Eukaryotic translation initiation factor 3 subunit B">
    <location>
        <begin position="1"/>
        <end position="740"/>
    </location>
</feature>
<feature type="domain" description="RRM" evidence="1">
    <location>
        <begin position="40"/>
        <end position="126"/>
    </location>
</feature>
<feature type="repeat" description="WD 1">
    <location>
        <begin position="193"/>
        <end position="230"/>
    </location>
</feature>
<feature type="repeat" description="WD 2">
    <location>
        <begin position="232"/>
        <end position="289"/>
    </location>
</feature>
<feature type="repeat" description="WD 3">
    <location>
        <begin position="302"/>
        <end position="343"/>
    </location>
</feature>
<feature type="repeat" description="WD 4">
    <location>
        <begin position="513"/>
        <end position="556"/>
    </location>
</feature>
<feature type="repeat" description="WD 5">
    <location>
        <begin position="571"/>
        <end position="609"/>
    </location>
</feature>
<feature type="region of interest" description="Disordered" evidence="2">
    <location>
        <begin position="1"/>
        <end position="22"/>
    </location>
</feature>
<feature type="region of interest" description="Disordered" evidence="2">
    <location>
        <begin position="695"/>
        <end position="721"/>
    </location>
</feature>
<feature type="compositionally biased region" description="Polar residues" evidence="2">
    <location>
        <begin position="1"/>
        <end position="10"/>
    </location>
</feature>
<feature type="compositionally biased region" description="Acidic residues" evidence="2">
    <location>
        <begin position="13"/>
        <end position="22"/>
    </location>
</feature>
<proteinExistence type="inferred from homology"/>
<evidence type="ECO:0000255" key="1">
    <source>
        <dbReference type="HAMAP-Rule" id="MF_03001"/>
    </source>
</evidence>
<evidence type="ECO:0000256" key="2">
    <source>
        <dbReference type="SAM" id="MobiDB-lite"/>
    </source>
</evidence>
<reference key="1">
    <citation type="journal article" date="2007" name="Nat. Biotechnol.">
        <title>Genome sequencing and analysis of the versatile cell factory Aspergillus niger CBS 513.88.</title>
        <authorList>
            <person name="Pel H.J."/>
            <person name="de Winde J.H."/>
            <person name="Archer D.B."/>
            <person name="Dyer P.S."/>
            <person name="Hofmann G."/>
            <person name="Schaap P.J."/>
            <person name="Turner G."/>
            <person name="de Vries R.P."/>
            <person name="Albang R."/>
            <person name="Albermann K."/>
            <person name="Andersen M.R."/>
            <person name="Bendtsen J.D."/>
            <person name="Benen J.A.E."/>
            <person name="van den Berg M."/>
            <person name="Breestraat S."/>
            <person name="Caddick M.X."/>
            <person name="Contreras R."/>
            <person name="Cornell M."/>
            <person name="Coutinho P.M."/>
            <person name="Danchin E.G.J."/>
            <person name="Debets A.J.M."/>
            <person name="Dekker P."/>
            <person name="van Dijck P.W.M."/>
            <person name="van Dijk A."/>
            <person name="Dijkhuizen L."/>
            <person name="Driessen A.J.M."/>
            <person name="d'Enfert C."/>
            <person name="Geysens S."/>
            <person name="Goosen C."/>
            <person name="Groot G.S.P."/>
            <person name="de Groot P.W.J."/>
            <person name="Guillemette T."/>
            <person name="Henrissat B."/>
            <person name="Herweijer M."/>
            <person name="van den Hombergh J.P.T.W."/>
            <person name="van den Hondel C.A.M.J.J."/>
            <person name="van der Heijden R.T.J.M."/>
            <person name="van der Kaaij R.M."/>
            <person name="Klis F.M."/>
            <person name="Kools H.J."/>
            <person name="Kubicek C.P."/>
            <person name="van Kuyk P.A."/>
            <person name="Lauber J."/>
            <person name="Lu X."/>
            <person name="van der Maarel M.J.E.C."/>
            <person name="Meulenberg R."/>
            <person name="Menke H."/>
            <person name="Mortimer M.A."/>
            <person name="Nielsen J."/>
            <person name="Oliver S.G."/>
            <person name="Olsthoorn M."/>
            <person name="Pal K."/>
            <person name="van Peij N.N.M.E."/>
            <person name="Ram A.F.J."/>
            <person name="Rinas U."/>
            <person name="Roubos J.A."/>
            <person name="Sagt C.M.J."/>
            <person name="Schmoll M."/>
            <person name="Sun J."/>
            <person name="Ussery D."/>
            <person name="Varga J."/>
            <person name="Vervecken W."/>
            <person name="van de Vondervoort P.J.J."/>
            <person name="Wedler H."/>
            <person name="Woesten H.A.B."/>
            <person name="Zeng A.-P."/>
            <person name="van Ooyen A.J.J."/>
            <person name="Visser J."/>
            <person name="Stam H."/>
        </authorList>
    </citation>
    <scope>NUCLEOTIDE SEQUENCE [LARGE SCALE GENOMIC DNA]</scope>
    <source>
        <strain>ATCC MYA-4892 / CBS 513.88 / FGSC A1513</strain>
    </source>
</reference>
<protein>
    <recommendedName>
        <fullName evidence="1">Eukaryotic translation initiation factor 3 subunit B</fullName>
        <shortName evidence="1">eIF3b</shortName>
    </recommendedName>
    <alternativeName>
        <fullName evidence="1">Eukaryotic translation initiation factor 3 90 kDa subunit homolog</fullName>
        <shortName evidence="1">eIF3 p90</shortName>
    </alternativeName>
    <alternativeName>
        <fullName>Translation initiation factor eIF3 p90 subunit homolog</fullName>
    </alternativeName>
</protein>
<comment type="function">
    <text evidence="1">RNA-binding component of the eukaryotic translation initiation factor 3 (eIF-3) complex, which is involved in protein synthesis of a specialized repertoire of mRNAs and, together with other initiation factors, stimulates binding of mRNA and methionyl-tRNAi to the 40S ribosome. The eIF-3 complex specifically targets and initiates translation of a subset of mRNAs involved in cell proliferation.</text>
</comment>
<comment type="subunit">
    <text evidence="1">Component of the eukaryotic translation initiation factor 3 (eIF-3) complex.</text>
</comment>
<comment type="subcellular location">
    <subcellularLocation>
        <location evidence="1">Cytoplasm</location>
    </subcellularLocation>
</comment>
<comment type="similarity">
    <text evidence="1">Belongs to the eIF-3 subunit B family.</text>
</comment>
<organism>
    <name type="scientific">Aspergillus niger (strain ATCC MYA-4892 / CBS 513.88 / FGSC A1513)</name>
    <dbReference type="NCBI Taxonomy" id="425011"/>
    <lineage>
        <taxon>Eukaryota</taxon>
        <taxon>Fungi</taxon>
        <taxon>Dikarya</taxon>
        <taxon>Ascomycota</taxon>
        <taxon>Pezizomycotina</taxon>
        <taxon>Eurotiomycetes</taxon>
        <taxon>Eurotiomycetidae</taxon>
        <taxon>Eurotiales</taxon>
        <taxon>Aspergillaceae</taxon>
        <taxon>Aspergillus</taxon>
        <taxon>Aspergillus subgen. Circumdati</taxon>
    </lineage>
</organism>
<keyword id="KW-0963">Cytoplasm</keyword>
<keyword id="KW-0396">Initiation factor</keyword>
<keyword id="KW-0648">Protein biosynthesis</keyword>
<keyword id="KW-1185">Reference proteome</keyword>
<keyword id="KW-0677">Repeat</keyword>
<keyword id="KW-0694">RNA-binding</keyword>
<keyword id="KW-0853">WD repeat</keyword>
<name>EIF3B_ASPNC</name>
<gene>
    <name type="primary">prt1</name>
    <name type="ORF">An01g06230</name>
</gene>
<accession>A2Q908</accession>
<sequence length="740" mass="84246">MAPSFDTLTEQDLHEEEEEEIDFSDLKEQYEVKLEEGLDTFVVIDGLPVVPEESRQKLIKFLLRKLNTVGHTSEDAVFMPLNDKNMSEGFAFVEYETPEQAIAAVKQLHGVPLDKKHTLAVNKLMDIDRYGREGRIDEEYKPPTIEPFKEKEHLRSWLGDANARDQFALYRGDKVGVFWNNKSNPPENVVDRAHWTQLFVQWSPKGTYLASVHPQGVQLWGGPAFSKQKQFPHPFVQLVEFSPGESYLTTWSARPIQVEEGHPVLTYEEDGKNIIIWDIVTGKPLRSFVSHDLTAGPGGDGEPKKKVQWPAFKWSADEKYVARMQQHQSISIYELPRMNLLGKTSVKIDGVMDFEWSPATVVREGVKQYEQLLCFWTPEIGSNPARVALMSVPSKEIVRTRNLFNVSDVKLHWQSQGTYVCVKVDRHSKSKKSMATNLEIFRVREKGVPVEVVDSLKDTVINFAWEPNGGRFVAITTGEAPSGAAVLPKTSVSFFAPEKKGVSAGNFKVVRTIEKKTSNAIYWSPKGRFVVVATVHSQTNFDIDFWDMDFEGEKPEGEKDLAANLQLMKTVEHYGVTDIDWDPTGRYVVSSASVWTHSMENGYNIHTFAGQTLAEHPTDKFKQFIWRPRPPTLLSKEEQKQVRKNLREYSKEFDEEDKYAVDIANTAVVETRKRVLNEWAAWIRREKEMLAEEKDAYGVPEDVDSSKQAKDAPAVSEDQGETVVEEIVEEIIEENEEVIG</sequence>
<dbReference type="EMBL" id="AM269969">
    <property type="protein sequence ID" value="CAK37098.1"/>
    <property type="molecule type" value="Genomic_DNA"/>
</dbReference>
<dbReference type="RefSeq" id="XP_001389047.1">
    <property type="nucleotide sequence ID" value="XM_001389010.2"/>
</dbReference>
<dbReference type="SMR" id="A2Q908"/>
<dbReference type="EnsemblFungi" id="CAK37098">
    <property type="protein sequence ID" value="CAK37098"/>
    <property type="gene ID" value="An01g06230"/>
</dbReference>
<dbReference type="GeneID" id="4977446"/>
<dbReference type="KEGG" id="ang:An01g06230"/>
<dbReference type="VEuPathDB" id="FungiDB:An01g06230"/>
<dbReference type="HOGENOM" id="CLU_011152_4_0_1"/>
<dbReference type="Proteomes" id="UP000006706">
    <property type="component" value="Chromosome 2R"/>
</dbReference>
<dbReference type="GO" id="GO:0010494">
    <property type="term" value="C:cytoplasmic stress granule"/>
    <property type="evidence" value="ECO:0007669"/>
    <property type="project" value="EnsemblFungi"/>
</dbReference>
<dbReference type="GO" id="GO:0016282">
    <property type="term" value="C:eukaryotic 43S preinitiation complex"/>
    <property type="evidence" value="ECO:0007669"/>
    <property type="project" value="UniProtKB-UniRule"/>
</dbReference>
<dbReference type="GO" id="GO:0033290">
    <property type="term" value="C:eukaryotic 48S preinitiation complex"/>
    <property type="evidence" value="ECO:0007669"/>
    <property type="project" value="UniProtKB-UniRule"/>
</dbReference>
<dbReference type="GO" id="GO:0071540">
    <property type="term" value="C:eukaryotic translation initiation factor 3 complex, eIF3e"/>
    <property type="evidence" value="ECO:0007669"/>
    <property type="project" value="EnsemblFungi"/>
</dbReference>
<dbReference type="GO" id="GO:0071541">
    <property type="term" value="C:eukaryotic translation initiation factor 3 complex, eIF3m"/>
    <property type="evidence" value="ECO:0007669"/>
    <property type="project" value="EnsemblFungi"/>
</dbReference>
<dbReference type="GO" id="GO:0043614">
    <property type="term" value="C:multi-eIF complex"/>
    <property type="evidence" value="ECO:0007669"/>
    <property type="project" value="EnsemblFungi"/>
</dbReference>
<dbReference type="GO" id="GO:0042802">
    <property type="term" value="F:identical protein binding"/>
    <property type="evidence" value="ECO:0007669"/>
    <property type="project" value="EnsemblFungi"/>
</dbReference>
<dbReference type="GO" id="GO:0003723">
    <property type="term" value="F:RNA binding"/>
    <property type="evidence" value="ECO:0007669"/>
    <property type="project" value="UniProtKB-UniRule"/>
</dbReference>
<dbReference type="GO" id="GO:0003743">
    <property type="term" value="F:translation initiation factor activity"/>
    <property type="evidence" value="ECO:0007669"/>
    <property type="project" value="UniProtKB-UniRule"/>
</dbReference>
<dbReference type="GO" id="GO:0031369">
    <property type="term" value="F:translation initiation factor binding"/>
    <property type="evidence" value="ECO:0007669"/>
    <property type="project" value="InterPro"/>
</dbReference>
<dbReference type="GO" id="GO:0001732">
    <property type="term" value="P:formation of cytoplasmic translation initiation complex"/>
    <property type="evidence" value="ECO:0007669"/>
    <property type="project" value="UniProtKB-UniRule"/>
</dbReference>
<dbReference type="CDD" id="cd12278">
    <property type="entry name" value="RRM_eIF3B"/>
    <property type="match status" value="1"/>
</dbReference>
<dbReference type="FunFam" id="2.130.10.10:FF:000419">
    <property type="entry name" value="Eukaryotic translation initiation factor 3 subunit B"/>
    <property type="match status" value="1"/>
</dbReference>
<dbReference type="FunFam" id="3.30.70.330:FF:000235">
    <property type="entry name" value="Eukaryotic translation initiation factor 3 subunit B"/>
    <property type="match status" value="1"/>
</dbReference>
<dbReference type="Gene3D" id="3.30.70.330">
    <property type="match status" value="1"/>
</dbReference>
<dbReference type="Gene3D" id="2.130.10.10">
    <property type="entry name" value="YVTN repeat-like/Quinoprotein amine dehydrogenase"/>
    <property type="match status" value="2"/>
</dbReference>
<dbReference type="HAMAP" id="MF_03001">
    <property type="entry name" value="eIF3b"/>
    <property type="match status" value="1"/>
</dbReference>
<dbReference type="InterPro" id="IPR011400">
    <property type="entry name" value="EIF3B"/>
</dbReference>
<dbReference type="InterPro" id="IPR034363">
    <property type="entry name" value="eIF3B_RRM"/>
</dbReference>
<dbReference type="InterPro" id="IPR012677">
    <property type="entry name" value="Nucleotide-bd_a/b_plait_sf"/>
</dbReference>
<dbReference type="InterPro" id="IPR035979">
    <property type="entry name" value="RBD_domain_sf"/>
</dbReference>
<dbReference type="InterPro" id="IPR000504">
    <property type="entry name" value="RRM_dom"/>
</dbReference>
<dbReference type="InterPro" id="IPR013979">
    <property type="entry name" value="TIF_beta_prop-like"/>
</dbReference>
<dbReference type="InterPro" id="IPR015943">
    <property type="entry name" value="WD40/YVTN_repeat-like_dom_sf"/>
</dbReference>
<dbReference type="PANTHER" id="PTHR14068">
    <property type="entry name" value="EUKARYOTIC TRANSLATION INITIATION FACTOR 3 EIF3 -RELATED"/>
    <property type="match status" value="1"/>
</dbReference>
<dbReference type="PANTHER" id="PTHR14068:SF0">
    <property type="entry name" value="EUKARYOTIC TRANSLATION INITIATION FACTOR 3 SUBUNIT B"/>
    <property type="match status" value="1"/>
</dbReference>
<dbReference type="Pfam" id="PF08662">
    <property type="entry name" value="eIF2A"/>
    <property type="match status" value="1"/>
</dbReference>
<dbReference type="Pfam" id="PF00076">
    <property type="entry name" value="RRM_1"/>
    <property type="match status" value="1"/>
</dbReference>
<dbReference type="PIRSF" id="PIRSF036424">
    <property type="entry name" value="eIF3b"/>
    <property type="match status" value="1"/>
</dbReference>
<dbReference type="SMART" id="SM00360">
    <property type="entry name" value="RRM"/>
    <property type="match status" value="1"/>
</dbReference>
<dbReference type="SUPFAM" id="SSF54928">
    <property type="entry name" value="RNA-binding domain, RBD"/>
    <property type="match status" value="1"/>
</dbReference>
<dbReference type="SUPFAM" id="SSF69322">
    <property type="entry name" value="Tricorn protease domain 2"/>
    <property type="match status" value="1"/>
</dbReference>
<dbReference type="PROSITE" id="PS50102">
    <property type="entry name" value="RRM"/>
    <property type="match status" value="1"/>
</dbReference>